<dbReference type="EC" id="4.2.1.11" evidence="1"/>
<dbReference type="EMBL" id="AE017198">
    <property type="protein sequence ID" value="AAS09182.1"/>
    <property type="molecule type" value="Genomic_DNA"/>
</dbReference>
<dbReference type="SMR" id="Q74IV0"/>
<dbReference type="KEGG" id="ljo:LJ_1416"/>
<dbReference type="eggNOG" id="COG0148">
    <property type="taxonomic scope" value="Bacteria"/>
</dbReference>
<dbReference type="HOGENOM" id="CLU_031223_2_1_9"/>
<dbReference type="UniPathway" id="UPA00109">
    <property type="reaction ID" value="UER00187"/>
</dbReference>
<dbReference type="Proteomes" id="UP000000581">
    <property type="component" value="Chromosome"/>
</dbReference>
<dbReference type="GO" id="GO:0009986">
    <property type="term" value="C:cell surface"/>
    <property type="evidence" value="ECO:0007669"/>
    <property type="project" value="UniProtKB-SubCell"/>
</dbReference>
<dbReference type="GO" id="GO:0005576">
    <property type="term" value="C:extracellular region"/>
    <property type="evidence" value="ECO:0007669"/>
    <property type="project" value="UniProtKB-SubCell"/>
</dbReference>
<dbReference type="GO" id="GO:0000015">
    <property type="term" value="C:phosphopyruvate hydratase complex"/>
    <property type="evidence" value="ECO:0007669"/>
    <property type="project" value="InterPro"/>
</dbReference>
<dbReference type="GO" id="GO:0043236">
    <property type="term" value="F:laminin binding"/>
    <property type="evidence" value="ECO:0000314"/>
    <property type="project" value="CAFA"/>
</dbReference>
<dbReference type="GO" id="GO:0000287">
    <property type="term" value="F:magnesium ion binding"/>
    <property type="evidence" value="ECO:0007669"/>
    <property type="project" value="UniProtKB-UniRule"/>
</dbReference>
<dbReference type="GO" id="GO:0004634">
    <property type="term" value="F:phosphopyruvate hydratase activity"/>
    <property type="evidence" value="ECO:0007669"/>
    <property type="project" value="UniProtKB-UniRule"/>
</dbReference>
<dbReference type="GO" id="GO:0006096">
    <property type="term" value="P:glycolytic process"/>
    <property type="evidence" value="ECO:0007669"/>
    <property type="project" value="UniProtKB-UniRule"/>
</dbReference>
<dbReference type="CDD" id="cd03313">
    <property type="entry name" value="enolase"/>
    <property type="match status" value="1"/>
</dbReference>
<dbReference type="FunFam" id="3.20.20.120:FF:000014">
    <property type="entry name" value="Enolase"/>
    <property type="match status" value="1"/>
</dbReference>
<dbReference type="FunFam" id="3.30.390.10:FF:000001">
    <property type="entry name" value="Enolase"/>
    <property type="match status" value="1"/>
</dbReference>
<dbReference type="Gene3D" id="3.20.20.120">
    <property type="entry name" value="Enolase-like C-terminal domain"/>
    <property type="match status" value="1"/>
</dbReference>
<dbReference type="Gene3D" id="3.30.390.10">
    <property type="entry name" value="Enolase-like, N-terminal domain"/>
    <property type="match status" value="1"/>
</dbReference>
<dbReference type="HAMAP" id="MF_00318">
    <property type="entry name" value="Enolase"/>
    <property type="match status" value="1"/>
</dbReference>
<dbReference type="InterPro" id="IPR000941">
    <property type="entry name" value="Enolase"/>
</dbReference>
<dbReference type="InterPro" id="IPR036849">
    <property type="entry name" value="Enolase-like_C_sf"/>
</dbReference>
<dbReference type="InterPro" id="IPR029017">
    <property type="entry name" value="Enolase-like_N"/>
</dbReference>
<dbReference type="InterPro" id="IPR020810">
    <property type="entry name" value="Enolase_C"/>
</dbReference>
<dbReference type="InterPro" id="IPR020809">
    <property type="entry name" value="Enolase_CS"/>
</dbReference>
<dbReference type="InterPro" id="IPR020811">
    <property type="entry name" value="Enolase_N"/>
</dbReference>
<dbReference type="NCBIfam" id="TIGR01060">
    <property type="entry name" value="eno"/>
    <property type="match status" value="1"/>
</dbReference>
<dbReference type="PANTHER" id="PTHR11902">
    <property type="entry name" value="ENOLASE"/>
    <property type="match status" value="1"/>
</dbReference>
<dbReference type="PANTHER" id="PTHR11902:SF1">
    <property type="entry name" value="ENOLASE"/>
    <property type="match status" value="1"/>
</dbReference>
<dbReference type="Pfam" id="PF00113">
    <property type="entry name" value="Enolase_C"/>
    <property type="match status" value="1"/>
</dbReference>
<dbReference type="Pfam" id="PF03952">
    <property type="entry name" value="Enolase_N"/>
    <property type="match status" value="1"/>
</dbReference>
<dbReference type="PIRSF" id="PIRSF001400">
    <property type="entry name" value="Enolase"/>
    <property type="match status" value="1"/>
</dbReference>
<dbReference type="PRINTS" id="PR00148">
    <property type="entry name" value="ENOLASE"/>
</dbReference>
<dbReference type="SFLD" id="SFLDF00002">
    <property type="entry name" value="enolase"/>
    <property type="match status" value="1"/>
</dbReference>
<dbReference type="SFLD" id="SFLDG00178">
    <property type="entry name" value="enolase"/>
    <property type="match status" value="1"/>
</dbReference>
<dbReference type="SMART" id="SM01192">
    <property type="entry name" value="Enolase_C"/>
    <property type="match status" value="1"/>
</dbReference>
<dbReference type="SMART" id="SM01193">
    <property type="entry name" value="Enolase_N"/>
    <property type="match status" value="1"/>
</dbReference>
<dbReference type="SUPFAM" id="SSF51604">
    <property type="entry name" value="Enolase C-terminal domain-like"/>
    <property type="match status" value="1"/>
</dbReference>
<dbReference type="SUPFAM" id="SSF54826">
    <property type="entry name" value="Enolase N-terminal domain-like"/>
    <property type="match status" value="1"/>
</dbReference>
<dbReference type="PROSITE" id="PS00164">
    <property type="entry name" value="ENOLASE"/>
    <property type="match status" value="1"/>
</dbReference>
<evidence type="ECO:0000255" key="1">
    <source>
        <dbReference type="HAMAP-Rule" id="MF_00318"/>
    </source>
</evidence>
<reference key="1">
    <citation type="journal article" date="2004" name="Proc. Natl. Acad. Sci. U.S.A.">
        <title>The genome sequence of the probiotic intestinal bacterium Lactobacillus johnsonii NCC 533.</title>
        <authorList>
            <person name="Pridmore R.D."/>
            <person name="Berger B."/>
            <person name="Desiere F."/>
            <person name="Vilanova D."/>
            <person name="Barretto C."/>
            <person name="Pittet A.-C."/>
            <person name="Zwahlen M.-C."/>
            <person name="Rouvet M."/>
            <person name="Altermann E."/>
            <person name="Barrangou R."/>
            <person name="Mollet B."/>
            <person name="Mercenier A."/>
            <person name="Klaenhammer T."/>
            <person name="Arigoni F."/>
            <person name="Schell M.A."/>
        </authorList>
    </citation>
    <scope>NUCLEOTIDE SEQUENCE [LARGE SCALE GENOMIC DNA]</scope>
    <source>
        <strain>CNCM I-1225 / La1 / NCC 533</strain>
    </source>
</reference>
<sequence length="428" mass="46633">MLKSVIENVHALEIFDSRGNPTVEVFVTLSNGVVGKAEVPSGASTGENEAVELRDGGSRLGGKGVMNAVNNVNTEINDALKGLDPHDQPNIDATMIALDGTPNKGRLGANAILGVSMATAAAAAKDNHQPLYRYLGGTDLEMPQTFHNVINGGEHADNGIDIQEFMITPVAKTSFRDGFEKIVNVYHTLKKVLEDMGYETGLGDEGGFAPNMKNSEEALKALHESIIKAGYKPGEDIAIACDCAASYFYNKEDGKYHLEGKVLTDEELADYYDKLLDEFPELISMEDPYDENDVEGMVKFTQSHKDRIQIVLDDFICTNPKLLNKAIHEGAGNASLIKLNQIGTVTETLETIRLSRKNGYNTMISHRSGETGDTFIADFAVAVNGGQLKTGAPARSERVEKYNRLLEIEEELGKGERLAFFPDNVDLD</sequence>
<feature type="chain" id="PRO_0000133903" description="Enolase 3">
    <location>
        <begin position="1"/>
        <end position="428"/>
    </location>
</feature>
<feature type="active site" description="Proton donor" evidence="1">
    <location>
        <position position="205"/>
    </location>
</feature>
<feature type="active site" description="Proton acceptor" evidence="1">
    <location>
        <position position="338"/>
    </location>
</feature>
<feature type="binding site" evidence="1">
    <location>
        <position position="163"/>
    </location>
    <ligand>
        <name>(2R)-2-phosphoglycerate</name>
        <dbReference type="ChEBI" id="CHEBI:58289"/>
    </ligand>
</feature>
<feature type="binding site" evidence="1">
    <location>
        <position position="242"/>
    </location>
    <ligand>
        <name>Mg(2+)</name>
        <dbReference type="ChEBI" id="CHEBI:18420"/>
    </ligand>
</feature>
<feature type="binding site" evidence="1">
    <location>
        <position position="286"/>
    </location>
    <ligand>
        <name>Mg(2+)</name>
        <dbReference type="ChEBI" id="CHEBI:18420"/>
    </ligand>
</feature>
<feature type="binding site" evidence="1">
    <location>
        <position position="313"/>
    </location>
    <ligand>
        <name>Mg(2+)</name>
        <dbReference type="ChEBI" id="CHEBI:18420"/>
    </ligand>
</feature>
<feature type="binding site" evidence="1">
    <location>
        <position position="338"/>
    </location>
    <ligand>
        <name>(2R)-2-phosphoglycerate</name>
        <dbReference type="ChEBI" id="CHEBI:58289"/>
    </ligand>
</feature>
<feature type="binding site" evidence="1">
    <location>
        <position position="367"/>
    </location>
    <ligand>
        <name>(2R)-2-phosphoglycerate</name>
        <dbReference type="ChEBI" id="CHEBI:58289"/>
    </ligand>
</feature>
<feature type="binding site" evidence="1">
    <location>
        <position position="368"/>
    </location>
    <ligand>
        <name>(2R)-2-phosphoglycerate</name>
        <dbReference type="ChEBI" id="CHEBI:58289"/>
    </ligand>
</feature>
<feature type="binding site" evidence="1">
    <location>
        <position position="389"/>
    </location>
    <ligand>
        <name>(2R)-2-phosphoglycerate</name>
        <dbReference type="ChEBI" id="CHEBI:58289"/>
    </ligand>
</feature>
<organism>
    <name type="scientific">Lactobacillus johnsonii (strain CNCM I-12250 / La1 / NCC 533)</name>
    <dbReference type="NCBI Taxonomy" id="257314"/>
    <lineage>
        <taxon>Bacteria</taxon>
        <taxon>Bacillati</taxon>
        <taxon>Bacillota</taxon>
        <taxon>Bacilli</taxon>
        <taxon>Lactobacillales</taxon>
        <taxon>Lactobacillaceae</taxon>
        <taxon>Lactobacillus</taxon>
    </lineage>
</organism>
<gene>
    <name evidence="1" type="primary">eno3</name>
    <name type="ordered locus">LJ_1416</name>
</gene>
<proteinExistence type="inferred from homology"/>
<protein>
    <recommendedName>
        <fullName evidence="1">Enolase 3</fullName>
        <ecNumber evidence="1">4.2.1.11</ecNumber>
    </recommendedName>
    <alternativeName>
        <fullName evidence="1">2-phospho-D-glycerate hydro-lyase 3</fullName>
    </alternativeName>
    <alternativeName>
        <fullName evidence="1">2-phosphoglycerate dehydratase 3</fullName>
    </alternativeName>
</protein>
<comment type="function">
    <text evidence="1">Catalyzes the reversible conversion of 2-phosphoglycerate (2-PG) into phosphoenolpyruvate (PEP). It is essential for the degradation of carbohydrates via glycolysis.</text>
</comment>
<comment type="catalytic activity">
    <reaction evidence="1">
        <text>(2R)-2-phosphoglycerate = phosphoenolpyruvate + H2O</text>
        <dbReference type="Rhea" id="RHEA:10164"/>
        <dbReference type="ChEBI" id="CHEBI:15377"/>
        <dbReference type="ChEBI" id="CHEBI:58289"/>
        <dbReference type="ChEBI" id="CHEBI:58702"/>
        <dbReference type="EC" id="4.2.1.11"/>
    </reaction>
</comment>
<comment type="cofactor">
    <cofactor evidence="1">
        <name>Mg(2+)</name>
        <dbReference type="ChEBI" id="CHEBI:18420"/>
    </cofactor>
    <text evidence="1">Binds a second Mg(2+) ion via substrate during catalysis.</text>
</comment>
<comment type="pathway">
    <text evidence="1">Carbohydrate degradation; glycolysis; pyruvate from D-glyceraldehyde 3-phosphate: step 4/5.</text>
</comment>
<comment type="subcellular location">
    <subcellularLocation>
        <location evidence="1">Cytoplasm</location>
    </subcellularLocation>
    <subcellularLocation>
        <location evidence="1">Secreted</location>
    </subcellularLocation>
    <subcellularLocation>
        <location evidence="1">Cell surface</location>
    </subcellularLocation>
    <text evidence="1">Fractions of enolase are present in both the cytoplasm and on the cell surface.</text>
</comment>
<comment type="similarity">
    <text evidence="1">Belongs to the enolase family.</text>
</comment>
<keyword id="KW-0963">Cytoplasm</keyword>
<keyword id="KW-0324">Glycolysis</keyword>
<keyword id="KW-0456">Lyase</keyword>
<keyword id="KW-0460">Magnesium</keyword>
<keyword id="KW-0479">Metal-binding</keyword>
<keyword id="KW-0964">Secreted</keyword>
<name>ENO3_LACJO</name>
<accession>Q74IV0</accession>